<proteinExistence type="inferred from homology"/>
<comment type="function">
    <text evidence="1">Catalyzes the transfer of a dimethylallyl group onto the adenine at position 37 in tRNAs that read codons beginning with uridine, leading to the formation of N6-(dimethylallyl)adenosine (i(6)A).</text>
</comment>
<comment type="catalytic activity">
    <reaction evidence="1">
        <text>adenosine(37) in tRNA + dimethylallyl diphosphate = N(6)-dimethylallyladenosine(37) in tRNA + diphosphate</text>
        <dbReference type="Rhea" id="RHEA:26482"/>
        <dbReference type="Rhea" id="RHEA-COMP:10162"/>
        <dbReference type="Rhea" id="RHEA-COMP:10375"/>
        <dbReference type="ChEBI" id="CHEBI:33019"/>
        <dbReference type="ChEBI" id="CHEBI:57623"/>
        <dbReference type="ChEBI" id="CHEBI:74411"/>
        <dbReference type="ChEBI" id="CHEBI:74415"/>
        <dbReference type="EC" id="2.5.1.75"/>
    </reaction>
</comment>
<comment type="cofactor">
    <cofactor evidence="1">
        <name>Mg(2+)</name>
        <dbReference type="ChEBI" id="CHEBI:18420"/>
    </cofactor>
</comment>
<comment type="subunit">
    <text evidence="1">Monomer.</text>
</comment>
<comment type="similarity">
    <text evidence="1">Belongs to the IPP transferase family.</text>
</comment>
<dbReference type="EC" id="2.5.1.75" evidence="1"/>
<dbReference type="EMBL" id="CP000920">
    <property type="protein sequence ID" value="ACO20902.1"/>
    <property type="molecule type" value="Genomic_DNA"/>
</dbReference>
<dbReference type="RefSeq" id="WP_000850157.1">
    <property type="nucleotide sequence ID" value="NC_012467.1"/>
</dbReference>
<dbReference type="SMR" id="C1CJD7"/>
<dbReference type="GeneID" id="45653935"/>
<dbReference type="KEGG" id="spp:SPP_0692"/>
<dbReference type="HOGENOM" id="CLU_032616_0_1_9"/>
<dbReference type="GO" id="GO:0005524">
    <property type="term" value="F:ATP binding"/>
    <property type="evidence" value="ECO:0007669"/>
    <property type="project" value="UniProtKB-UniRule"/>
</dbReference>
<dbReference type="GO" id="GO:0052381">
    <property type="term" value="F:tRNA dimethylallyltransferase activity"/>
    <property type="evidence" value="ECO:0007669"/>
    <property type="project" value="UniProtKB-UniRule"/>
</dbReference>
<dbReference type="GO" id="GO:0006400">
    <property type="term" value="P:tRNA modification"/>
    <property type="evidence" value="ECO:0007669"/>
    <property type="project" value="TreeGrafter"/>
</dbReference>
<dbReference type="Gene3D" id="3.40.50.300">
    <property type="entry name" value="P-loop containing nucleotide triphosphate hydrolases"/>
    <property type="match status" value="1"/>
</dbReference>
<dbReference type="HAMAP" id="MF_00185">
    <property type="entry name" value="IPP_trans"/>
    <property type="match status" value="1"/>
</dbReference>
<dbReference type="InterPro" id="IPR039657">
    <property type="entry name" value="Dimethylallyltransferase"/>
</dbReference>
<dbReference type="InterPro" id="IPR018022">
    <property type="entry name" value="IPT"/>
</dbReference>
<dbReference type="InterPro" id="IPR027417">
    <property type="entry name" value="P-loop_NTPase"/>
</dbReference>
<dbReference type="NCBIfam" id="TIGR00174">
    <property type="entry name" value="miaA"/>
    <property type="match status" value="1"/>
</dbReference>
<dbReference type="PANTHER" id="PTHR11088">
    <property type="entry name" value="TRNA DIMETHYLALLYLTRANSFERASE"/>
    <property type="match status" value="1"/>
</dbReference>
<dbReference type="PANTHER" id="PTHR11088:SF60">
    <property type="entry name" value="TRNA DIMETHYLALLYLTRANSFERASE"/>
    <property type="match status" value="1"/>
</dbReference>
<dbReference type="Pfam" id="PF01715">
    <property type="entry name" value="IPPT"/>
    <property type="match status" value="1"/>
</dbReference>
<dbReference type="SUPFAM" id="SSF52540">
    <property type="entry name" value="P-loop containing nucleoside triphosphate hydrolases"/>
    <property type="match status" value="2"/>
</dbReference>
<keyword id="KW-0067">ATP-binding</keyword>
<keyword id="KW-0460">Magnesium</keyword>
<keyword id="KW-0547">Nucleotide-binding</keyword>
<keyword id="KW-0808">Transferase</keyword>
<keyword id="KW-0819">tRNA processing</keyword>
<feature type="chain" id="PRO_1000191867" description="tRNA dimethylallyltransferase">
    <location>
        <begin position="1"/>
        <end position="294"/>
    </location>
</feature>
<feature type="region of interest" description="Interaction with substrate tRNA" evidence="1">
    <location>
        <begin position="35"/>
        <end position="38"/>
    </location>
</feature>
<feature type="binding site" evidence="1">
    <location>
        <begin position="10"/>
        <end position="17"/>
    </location>
    <ligand>
        <name>ATP</name>
        <dbReference type="ChEBI" id="CHEBI:30616"/>
    </ligand>
</feature>
<feature type="binding site" evidence="1">
    <location>
        <begin position="12"/>
        <end position="17"/>
    </location>
    <ligand>
        <name>substrate</name>
    </ligand>
</feature>
<feature type="site" description="Interaction with substrate tRNA" evidence="1">
    <location>
        <position position="101"/>
    </location>
</feature>
<feature type="site" description="Interaction with substrate tRNA" evidence="1">
    <location>
        <position position="127"/>
    </location>
</feature>
<gene>
    <name evidence="1" type="primary">miaA</name>
    <name type="ordered locus">SPP_0692</name>
</gene>
<reference key="1">
    <citation type="journal article" date="2010" name="Genome Biol.">
        <title>Structure and dynamics of the pan-genome of Streptococcus pneumoniae and closely related species.</title>
        <authorList>
            <person name="Donati C."/>
            <person name="Hiller N.L."/>
            <person name="Tettelin H."/>
            <person name="Muzzi A."/>
            <person name="Croucher N.J."/>
            <person name="Angiuoli S.V."/>
            <person name="Oggioni M."/>
            <person name="Dunning Hotopp J.C."/>
            <person name="Hu F.Z."/>
            <person name="Riley D.R."/>
            <person name="Covacci A."/>
            <person name="Mitchell T.J."/>
            <person name="Bentley S.D."/>
            <person name="Kilian M."/>
            <person name="Ehrlich G.D."/>
            <person name="Rappuoli R."/>
            <person name="Moxon E.R."/>
            <person name="Masignani V."/>
        </authorList>
    </citation>
    <scope>NUCLEOTIDE SEQUENCE [LARGE SCALE GENOMIC DNA]</scope>
    <source>
        <strain>P1031</strain>
    </source>
</reference>
<protein>
    <recommendedName>
        <fullName evidence="1">tRNA dimethylallyltransferase</fullName>
        <ecNumber evidence="1">2.5.1.75</ecNumber>
    </recommendedName>
    <alternativeName>
        <fullName evidence="1">Dimethylallyl diphosphate:tRNA dimethylallyltransferase</fullName>
        <shortName evidence="1">DMAPP:tRNA dimethylallyltransferase</shortName>
        <shortName evidence="1">DMATase</shortName>
    </alternativeName>
    <alternativeName>
        <fullName evidence="1">Isopentenyl-diphosphate:tRNA isopentenyltransferase</fullName>
        <shortName evidence="1">IPP transferase</shortName>
        <shortName evidence="1">IPPT</shortName>
        <shortName evidence="1">IPTase</shortName>
    </alternativeName>
</protein>
<sequence length="294" mass="33396">MKTKIIVIVGPTAVGKTALAIEVAKCFNGEVVSGDSQQVYRGLDIGTAKASPEEQAAVPHHLIDVREITESYSAFDFVSEAKMTIEDIHSRGKLAIIAGGTGLYIQSLLEGYHLGGETPHEEILAYRASLEPYSDEELAHLVEQAGLEIPQFNRRRAMRALEIAHFGQDLENQEILYEPLIICLDDERSQLYERINHRVDLMFEAGLLDEAKWLFDHSPNVQAAKGIGYKELFPYFRGEQTFEEARESLKQATRRFAKRQLTWFRNRMQVTFYQIGESGVQDRILSQIEEFLDD</sequence>
<evidence type="ECO:0000255" key="1">
    <source>
        <dbReference type="HAMAP-Rule" id="MF_00185"/>
    </source>
</evidence>
<name>MIAA_STRZP</name>
<organism>
    <name type="scientific">Streptococcus pneumoniae (strain P1031)</name>
    <dbReference type="NCBI Taxonomy" id="488223"/>
    <lineage>
        <taxon>Bacteria</taxon>
        <taxon>Bacillati</taxon>
        <taxon>Bacillota</taxon>
        <taxon>Bacilli</taxon>
        <taxon>Lactobacillales</taxon>
        <taxon>Streptococcaceae</taxon>
        <taxon>Streptococcus</taxon>
    </lineage>
</organism>
<accession>C1CJD7</accession>